<name>RL14_LUMRU</name>
<gene>
    <name type="primary">RPL14</name>
</gene>
<organism>
    <name type="scientific">Lumbricus rubellus</name>
    <name type="common">Humus earthworm</name>
    <dbReference type="NCBI Taxonomy" id="35632"/>
    <lineage>
        <taxon>Eukaryota</taxon>
        <taxon>Metazoa</taxon>
        <taxon>Spiralia</taxon>
        <taxon>Lophotrochozoa</taxon>
        <taxon>Annelida</taxon>
        <taxon>Clitellata</taxon>
        <taxon>Oligochaeta</taxon>
        <taxon>Crassiclitellata</taxon>
        <taxon>Lumbricina</taxon>
        <taxon>Lumbricidae</taxon>
        <taxon>Lumbricinae</taxon>
        <taxon>Lumbricus</taxon>
    </lineage>
</organism>
<comment type="similarity">
    <text evidence="1">Belongs to the eukaryotic ribosomal protein eL14 family.</text>
</comment>
<keyword id="KW-0687">Ribonucleoprotein</keyword>
<keyword id="KW-0689">Ribosomal protein</keyword>
<sequence length="152" mass="17532">MSFRRFVEIGRVARAVYGPDQGKLVAIVDVIDQNRALVDGPCTHVARKSMNFKELELTNLKAKFPHSAKTGVVKKAWEKDEISKKWEESHLAKKIAAKEKRKTLTDFERFKLMKAKQARNRLIKIEFGKLRKALKKTPAKPTRKPNKKLHKV</sequence>
<feature type="chain" id="PRO_0000132038" description="Large ribosomal subunit protein eL14">
    <location>
        <begin position="1"/>
        <end position="152"/>
    </location>
</feature>
<protein>
    <recommendedName>
        <fullName evidence="1">Large ribosomal subunit protein eL14</fullName>
    </recommendedName>
    <alternativeName>
        <fullName>60S ribosomal protein L14</fullName>
    </alternativeName>
</protein>
<reference key="1">
    <citation type="submission" date="1997-12" db="EMBL/GenBank/DDBJ databases">
        <authorList>
            <person name="Sturzenbaum S.R."/>
            <person name="Kille P."/>
            <person name="Morgan J."/>
        </authorList>
    </citation>
    <scope>NUCLEOTIDE SEQUENCE [GENOMIC DNA]</scope>
</reference>
<dbReference type="EMBL" id="AJ223201">
    <property type="protein sequence ID" value="CAA11176.1"/>
    <property type="molecule type" value="Genomic_DNA"/>
</dbReference>
<dbReference type="SMR" id="O46160"/>
<dbReference type="GO" id="GO:0022625">
    <property type="term" value="C:cytosolic large ribosomal subunit"/>
    <property type="evidence" value="ECO:0007669"/>
    <property type="project" value="TreeGrafter"/>
</dbReference>
<dbReference type="GO" id="GO:0003723">
    <property type="term" value="F:RNA binding"/>
    <property type="evidence" value="ECO:0007669"/>
    <property type="project" value="InterPro"/>
</dbReference>
<dbReference type="GO" id="GO:0003735">
    <property type="term" value="F:structural constituent of ribosome"/>
    <property type="evidence" value="ECO:0007669"/>
    <property type="project" value="InterPro"/>
</dbReference>
<dbReference type="GO" id="GO:0042273">
    <property type="term" value="P:ribosomal large subunit biogenesis"/>
    <property type="evidence" value="ECO:0007669"/>
    <property type="project" value="TreeGrafter"/>
</dbReference>
<dbReference type="GO" id="GO:0006412">
    <property type="term" value="P:translation"/>
    <property type="evidence" value="ECO:0007669"/>
    <property type="project" value="InterPro"/>
</dbReference>
<dbReference type="CDD" id="cd23702">
    <property type="entry name" value="eL14"/>
    <property type="match status" value="1"/>
</dbReference>
<dbReference type="FunFam" id="2.30.30.30:FF:000022">
    <property type="entry name" value="60S ribosomal protein L14"/>
    <property type="match status" value="1"/>
</dbReference>
<dbReference type="Gene3D" id="2.30.30.30">
    <property type="match status" value="1"/>
</dbReference>
<dbReference type="Gene3D" id="6.10.250.2270">
    <property type="match status" value="1"/>
</dbReference>
<dbReference type="InterPro" id="IPR014722">
    <property type="entry name" value="Rib_uL2_dom2"/>
</dbReference>
<dbReference type="InterPro" id="IPR039660">
    <property type="entry name" value="Ribosomal_eL14"/>
</dbReference>
<dbReference type="InterPro" id="IPR002784">
    <property type="entry name" value="Ribosomal_eL14_dom"/>
</dbReference>
<dbReference type="InterPro" id="IPR008991">
    <property type="entry name" value="Translation_prot_SH3-like_sf"/>
</dbReference>
<dbReference type="PANTHER" id="PTHR11127">
    <property type="entry name" value="60S RIBOSOMAL PROTEIN L14"/>
    <property type="match status" value="1"/>
</dbReference>
<dbReference type="PANTHER" id="PTHR11127:SF2">
    <property type="entry name" value="LARGE RIBOSOMAL SUBUNIT PROTEIN EL14"/>
    <property type="match status" value="1"/>
</dbReference>
<dbReference type="Pfam" id="PF01929">
    <property type="entry name" value="Ribosomal_L14e"/>
    <property type="match status" value="1"/>
</dbReference>
<dbReference type="SUPFAM" id="SSF50104">
    <property type="entry name" value="Translation proteins SH3-like domain"/>
    <property type="match status" value="1"/>
</dbReference>
<proteinExistence type="inferred from homology"/>
<accession>O46160</accession>
<evidence type="ECO:0000305" key="1"/>